<reference key="1">
    <citation type="journal article" date="2006" name="BMC Genomics">
        <title>Complete genome sequence of Shigella flexneri 5b and comparison with Shigella flexneri 2a.</title>
        <authorList>
            <person name="Nie H."/>
            <person name="Yang F."/>
            <person name="Zhang X."/>
            <person name="Yang J."/>
            <person name="Chen L."/>
            <person name="Wang J."/>
            <person name="Xiong Z."/>
            <person name="Peng J."/>
            <person name="Sun L."/>
            <person name="Dong J."/>
            <person name="Xue Y."/>
            <person name="Xu X."/>
            <person name="Chen S."/>
            <person name="Yao Z."/>
            <person name="Shen Y."/>
            <person name="Jin Q."/>
        </authorList>
    </citation>
    <scope>NUCLEOTIDE SEQUENCE [LARGE SCALE GENOMIC DNA]</scope>
    <source>
        <strain>8401</strain>
    </source>
</reference>
<dbReference type="EC" id="2.7.1.130" evidence="1"/>
<dbReference type="EMBL" id="CP000266">
    <property type="protein sequence ID" value="ABF03138.1"/>
    <property type="molecule type" value="Genomic_DNA"/>
</dbReference>
<dbReference type="RefSeq" id="WP_000570533.1">
    <property type="nucleotide sequence ID" value="NC_008258.1"/>
</dbReference>
<dbReference type="SMR" id="Q0SX00"/>
<dbReference type="KEGG" id="sfv:SFV_0916"/>
<dbReference type="HOGENOM" id="CLU_038816_2_0_6"/>
<dbReference type="UniPathway" id="UPA00359">
    <property type="reaction ID" value="UER00482"/>
</dbReference>
<dbReference type="Proteomes" id="UP000000659">
    <property type="component" value="Chromosome"/>
</dbReference>
<dbReference type="GO" id="GO:0005886">
    <property type="term" value="C:plasma membrane"/>
    <property type="evidence" value="ECO:0007669"/>
    <property type="project" value="TreeGrafter"/>
</dbReference>
<dbReference type="GO" id="GO:0005524">
    <property type="term" value="F:ATP binding"/>
    <property type="evidence" value="ECO:0007669"/>
    <property type="project" value="UniProtKB-UniRule"/>
</dbReference>
<dbReference type="GO" id="GO:0009029">
    <property type="term" value="F:tetraacyldisaccharide 4'-kinase activity"/>
    <property type="evidence" value="ECO:0007669"/>
    <property type="project" value="UniProtKB-UniRule"/>
</dbReference>
<dbReference type="GO" id="GO:0009245">
    <property type="term" value="P:lipid A biosynthetic process"/>
    <property type="evidence" value="ECO:0007669"/>
    <property type="project" value="UniProtKB-UniRule"/>
</dbReference>
<dbReference type="GO" id="GO:0009244">
    <property type="term" value="P:lipopolysaccharide core region biosynthetic process"/>
    <property type="evidence" value="ECO:0007669"/>
    <property type="project" value="TreeGrafter"/>
</dbReference>
<dbReference type="HAMAP" id="MF_00409">
    <property type="entry name" value="LpxK"/>
    <property type="match status" value="1"/>
</dbReference>
<dbReference type="InterPro" id="IPR003758">
    <property type="entry name" value="LpxK"/>
</dbReference>
<dbReference type="InterPro" id="IPR027417">
    <property type="entry name" value="P-loop_NTPase"/>
</dbReference>
<dbReference type="NCBIfam" id="TIGR00682">
    <property type="entry name" value="lpxK"/>
    <property type="match status" value="1"/>
</dbReference>
<dbReference type="PANTHER" id="PTHR42724">
    <property type="entry name" value="TETRAACYLDISACCHARIDE 4'-KINASE"/>
    <property type="match status" value="1"/>
</dbReference>
<dbReference type="PANTHER" id="PTHR42724:SF1">
    <property type="entry name" value="TETRAACYLDISACCHARIDE 4'-KINASE, MITOCHONDRIAL-RELATED"/>
    <property type="match status" value="1"/>
</dbReference>
<dbReference type="Pfam" id="PF02606">
    <property type="entry name" value="LpxK"/>
    <property type="match status" value="1"/>
</dbReference>
<dbReference type="SUPFAM" id="SSF52540">
    <property type="entry name" value="P-loop containing nucleoside triphosphate hydrolases"/>
    <property type="match status" value="1"/>
</dbReference>
<organism>
    <name type="scientific">Shigella flexneri serotype 5b (strain 8401)</name>
    <dbReference type="NCBI Taxonomy" id="373384"/>
    <lineage>
        <taxon>Bacteria</taxon>
        <taxon>Pseudomonadati</taxon>
        <taxon>Pseudomonadota</taxon>
        <taxon>Gammaproteobacteria</taxon>
        <taxon>Enterobacterales</taxon>
        <taxon>Enterobacteriaceae</taxon>
        <taxon>Shigella</taxon>
    </lineage>
</organism>
<comment type="function">
    <text evidence="1">Transfers the gamma-phosphate of ATP to the 4'-position of a tetraacyldisaccharide 1-phosphate intermediate (termed DS-1-P) to form tetraacyldisaccharide 1,4'-bis-phosphate (lipid IVA).</text>
</comment>
<comment type="catalytic activity">
    <reaction evidence="1">
        <text>a lipid A disaccharide + ATP = a lipid IVA + ADP + H(+)</text>
        <dbReference type="Rhea" id="RHEA:67840"/>
        <dbReference type="ChEBI" id="CHEBI:15378"/>
        <dbReference type="ChEBI" id="CHEBI:30616"/>
        <dbReference type="ChEBI" id="CHEBI:176343"/>
        <dbReference type="ChEBI" id="CHEBI:176425"/>
        <dbReference type="ChEBI" id="CHEBI:456216"/>
        <dbReference type="EC" id="2.7.1.130"/>
    </reaction>
</comment>
<comment type="pathway">
    <text evidence="1">Glycolipid biosynthesis; lipid IV(A) biosynthesis; lipid IV(A) from (3R)-3-hydroxytetradecanoyl-[acyl-carrier-protein] and UDP-N-acetyl-alpha-D-glucosamine: step 6/6.</text>
</comment>
<comment type="similarity">
    <text evidence="1">Belongs to the LpxK family.</text>
</comment>
<proteinExistence type="inferred from homology"/>
<evidence type="ECO:0000255" key="1">
    <source>
        <dbReference type="HAMAP-Rule" id="MF_00409"/>
    </source>
</evidence>
<name>LPXK_SHIF8</name>
<feature type="chain" id="PRO_0000291249" description="Tetraacyldisaccharide 4'-kinase">
    <location>
        <begin position="1"/>
        <end position="328"/>
    </location>
</feature>
<feature type="binding site" evidence="1">
    <location>
        <begin position="55"/>
        <end position="62"/>
    </location>
    <ligand>
        <name>ATP</name>
        <dbReference type="ChEBI" id="CHEBI:30616"/>
    </ligand>
</feature>
<keyword id="KW-0067">ATP-binding</keyword>
<keyword id="KW-0418">Kinase</keyword>
<keyword id="KW-0441">Lipid A biosynthesis</keyword>
<keyword id="KW-0444">Lipid biosynthesis</keyword>
<keyword id="KW-0443">Lipid metabolism</keyword>
<keyword id="KW-0547">Nucleotide-binding</keyword>
<keyword id="KW-0808">Transferase</keyword>
<sequence>MIEKIWSGESPLWRLLLPLSWLYGLVSGAIRLCYKLKLKRAWRAPVPVVVVGNLTAGGNGKTPVVVWLVEQLQQRGIRVGVVSRGYGGKAESYPLLLSADTTTAQAGDEPVLIYQRTDAPVAVSPVRSDAVKAILAQHPDVQIIVTDDGLQHYRLARDVEIVVIDGVRRFGNGWWLPAGPMRERAGRLKSVDAVIVNGGVPRSGEIPMHLLPGQAVNLRIGTRCDVAQLEHVVAMAGIGHPPRFFATLKMCGVQPEKCVPLADHQSLNHADVSALVSAGQTLVMTEKDAVKCRAFAEENWWYLPVDAQLSGDEPAKLLTQLTSLASGN</sequence>
<gene>
    <name evidence="1" type="primary">lpxK</name>
    <name type="ordered locus">SFV_0916</name>
</gene>
<protein>
    <recommendedName>
        <fullName evidence="1">Tetraacyldisaccharide 4'-kinase</fullName>
        <ecNumber evidence="1">2.7.1.130</ecNumber>
    </recommendedName>
    <alternativeName>
        <fullName evidence="1">Lipid A 4'-kinase</fullName>
    </alternativeName>
</protein>
<accession>Q0SX00</accession>